<reference key="1">
    <citation type="journal article" date="2002" name="Nucleic Acids Res.">
        <title>Genome sequence of Shigella flexneri 2a: insights into pathogenicity through comparison with genomes of Escherichia coli K12 and O157.</title>
        <authorList>
            <person name="Jin Q."/>
            <person name="Yuan Z."/>
            <person name="Xu J."/>
            <person name="Wang Y."/>
            <person name="Shen Y."/>
            <person name="Lu W."/>
            <person name="Wang J."/>
            <person name="Liu H."/>
            <person name="Yang J."/>
            <person name="Yang F."/>
            <person name="Zhang X."/>
            <person name="Zhang J."/>
            <person name="Yang G."/>
            <person name="Wu H."/>
            <person name="Qu D."/>
            <person name="Dong J."/>
            <person name="Sun L."/>
            <person name="Xue Y."/>
            <person name="Zhao A."/>
            <person name="Gao Y."/>
            <person name="Zhu J."/>
            <person name="Kan B."/>
            <person name="Ding K."/>
            <person name="Chen S."/>
            <person name="Cheng H."/>
            <person name="Yao Z."/>
            <person name="He B."/>
            <person name="Chen R."/>
            <person name="Ma D."/>
            <person name="Qiang B."/>
            <person name="Wen Y."/>
            <person name="Hou Y."/>
            <person name="Yu J."/>
        </authorList>
    </citation>
    <scope>NUCLEOTIDE SEQUENCE [LARGE SCALE GENOMIC DNA]</scope>
    <source>
        <strain>301 / Serotype 2a</strain>
    </source>
</reference>
<reference key="2">
    <citation type="journal article" date="2003" name="Infect. Immun.">
        <title>Complete genome sequence and comparative genomics of Shigella flexneri serotype 2a strain 2457T.</title>
        <authorList>
            <person name="Wei J."/>
            <person name="Goldberg M.B."/>
            <person name="Burland V."/>
            <person name="Venkatesan M.M."/>
            <person name="Deng W."/>
            <person name="Fournier G."/>
            <person name="Mayhew G.F."/>
            <person name="Plunkett G. III"/>
            <person name="Rose D.J."/>
            <person name="Darling A."/>
            <person name="Mau B."/>
            <person name="Perna N.T."/>
            <person name="Payne S.M."/>
            <person name="Runyen-Janecky L.J."/>
            <person name="Zhou S."/>
            <person name="Schwartz D.C."/>
            <person name="Blattner F.R."/>
        </authorList>
    </citation>
    <scope>NUCLEOTIDE SEQUENCE [LARGE SCALE GENOMIC DNA]</scope>
    <source>
        <strain>ATCC 700930 / 2457T / Serotype 2a</strain>
    </source>
</reference>
<proteinExistence type="inferred from homology"/>
<dbReference type="EMBL" id="AE005674">
    <property type="protein sequence ID" value="AAN42113.2"/>
    <property type="status" value="ALT_INIT"/>
    <property type="molecule type" value="Genomic_DNA"/>
</dbReference>
<dbReference type="EMBL" id="AE014073">
    <property type="protein sequence ID" value="AAP15989.1"/>
    <property type="status" value="ALT_INIT"/>
    <property type="molecule type" value="Genomic_DNA"/>
</dbReference>
<dbReference type="RefSeq" id="NP_706406.4">
    <property type="nucleotide sequence ID" value="NC_004337.2"/>
</dbReference>
<dbReference type="RefSeq" id="WP_000190288.1">
    <property type="nucleotide sequence ID" value="NZ_WPGW01000107.1"/>
</dbReference>
<dbReference type="BMRB" id="P0AAS8"/>
<dbReference type="SMR" id="P0AAS8"/>
<dbReference type="STRING" id="198214.SF0459"/>
<dbReference type="PaxDb" id="198214-SF0459"/>
<dbReference type="GeneID" id="1027734"/>
<dbReference type="GeneID" id="86945443"/>
<dbReference type="KEGG" id="sfl:SF0459"/>
<dbReference type="KEGG" id="sfx:S0467"/>
<dbReference type="PATRIC" id="fig|198214.7.peg.525"/>
<dbReference type="HOGENOM" id="CLU_127162_1_2_6"/>
<dbReference type="Proteomes" id="UP000001006">
    <property type="component" value="Chromosome"/>
</dbReference>
<dbReference type="Proteomes" id="UP000002673">
    <property type="component" value="Chromosome"/>
</dbReference>
<dbReference type="GO" id="GO:0003723">
    <property type="term" value="F:RNA binding"/>
    <property type="evidence" value="ECO:0007669"/>
    <property type="project" value="UniProtKB-KW"/>
</dbReference>
<dbReference type="CDD" id="cd00165">
    <property type="entry name" value="S4"/>
    <property type="match status" value="1"/>
</dbReference>
<dbReference type="FunFam" id="3.10.290.10:FF:000013">
    <property type="entry name" value="Ribosome-associated protein YbcJ"/>
    <property type="match status" value="1"/>
</dbReference>
<dbReference type="Gene3D" id="3.10.290.10">
    <property type="entry name" value="RNA-binding S4 domain"/>
    <property type="match status" value="1"/>
</dbReference>
<dbReference type="InterPro" id="IPR036986">
    <property type="entry name" value="S4_RNA-bd_sf"/>
</dbReference>
<dbReference type="NCBIfam" id="NF008561">
    <property type="entry name" value="PRK11507.1"/>
    <property type="match status" value="1"/>
</dbReference>
<dbReference type="Pfam" id="PF13275">
    <property type="entry name" value="S4_2"/>
    <property type="match status" value="1"/>
</dbReference>
<dbReference type="SUPFAM" id="SSF55174">
    <property type="entry name" value="Alpha-L RNA-binding motif"/>
    <property type="match status" value="1"/>
</dbReference>
<dbReference type="PROSITE" id="PS50889">
    <property type="entry name" value="S4"/>
    <property type="match status" value="1"/>
</dbReference>
<sequence length="70" mass="7390">MATFSLGKHPHVELCDLLKLEGWSESGAQAKIAIAEGQVKVDGAVETRKRCKIVAGQTVSFAGHSVQVVA</sequence>
<gene>
    <name type="primary">ybcJ</name>
    <name type="ordered locus">SF0459</name>
    <name type="ordered locus">S0467</name>
</gene>
<comment type="function">
    <text evidence="1">Probably binds RNA.</text>
</comment>
<comment type="sequence caution" evidence="3">
    <conflict type="erroneous initiation">
        <sequence resource="EMBL-CDS" id="AAN42113"/>
    </conflict>
    <text>Extended N-terminus.</text>
</comment>
<comment type="sequence caution" evidence="3">
    <conflict type="erroneous initiation">
        <sequence resource="EMBL-CDS" id="AAP15989"/>
    </conflict>
    <text>Extended N-terminus.</text>
</comment>
<feature type="chain" id="PRO_0000168650" description="Uncharacterized protein YbcJ">
    <location>
        <begin position="1"/>
        <end position="70"/>
    </location>
</feature>
<feature type="domain" description="S4 RNA-binding" evidence="2">
    <location>
        <begin position="12"/>
        <end position="68"/>
    </location>
</feature>
<accession>P0AAS8</accession>
<accession>P45571</accession>
<accession>P77661</accession>
<keyword id="KW-1185">Reference proteome</keyword>
<keyword id="KW-0694">RNA-binding</keyword>
<name>YBCJ_SHIFL</name>
<organism>
    <name type="scientific">Shigella flexneri</name>
    <dbReference type="NCBI Taxonomy" id="623"/>
    <lineage>
        <taxon>Bacteria</taxon>
        <taxon>Pseudomonadati</taxon>
        <taxon>Pseudomonadota</taxon>
        <taxon>Gammaproteobacteria</taxon>
        <taxon>Enterobacterales</taxon>
        <taxon>Enterobacteriaceae</taxon>
        <taxon>Shigella</taxon>
    </lineage>
</organism>
<protein>
    <recommendedName>
        <fullName>Uncharacterized protein YbcJ</fullName>
    </recommendedName>
</protein>
<evidence type="ECO:0000250" key="1"/>
<evidence type="ECO:0000255" key="2">
    <source>
        <dbReference type="PROSITE-ProRule" id="PRU00182"/>
    </source>
</evidence>
<evidence type="ECO:0000305" key="3"/>